<name>PXPA_SHIB3</name>
<organism>
    <name type="scientific">Shigella boydii serotype 18 (strain CDC 3083-94 / BS512)</name>
    <dbReference type="NCBI Taxonomy" id="344609"/>
    <lineage>
        <taxon>Bacteria</taxon>
        <taxon>Pseudomonadati</taxon>
        <taxon>Pseudomonadota</taxon>
        <taxon>Gammaproteobacteria</taxon>
        <taxon>Enterobacterales</taxon>
        <taxon>Enterobacteriaceae</taxon>
        <taxon>Shigella</taxon>
    </lineage>
</organism>
<dbReference type="EC" id="3.5.2.9" evidence="1"/>
<dbReference type="EMBL" id="CP001063">
    <property type="protein sequence ID" value="ACD09488.1"/>
    <property type="molecule type" value="Genomic_DNA"/>
</dbReference>
<dbReference type="RefSeq" id="WP_000687148.1">
    <property type="nucleotide sequence ID" value="NC_010658.1"/>
</dbReference>
<dbReference type="SMR" id="B2TU96"/>
<dbReference type="STRING" id="344609.SbBS512_E0630"/>
<dbReference type="KEGG" id="sbc:SbBS512_E0630"/>
<dbReference type="HOGENOM" id="CLU_069535_0_0_6"/>
<dbReference type="Proteomes" id="UP000001030">
    <property type="component" value="Chromosome"/>
</dbReference>
<dbReference type="GO" id="GO:0017168">
    <property type="term" value="F:5-oxoprolinase (ATP-hydrolyzing) activity"/>
    <property type="evidence" value="ECO:0007669"/>
    <property type="project" value="UniProtKB-UniRule"/>
</dbReference>
<dbReference type="GO" id="GO:0005524">
    <property type="term" value="F:ATP binding"/>
    <property type="evidence" value="ECO:0007669"/>
    <property type="project" value="UniProtKB-UniRule"/>
</dbReference>
<dbReference type="GO" id="GO:0005975">
    <property type="term" value="P:carbohydrate metabolic process"/>
    <property type="evidence" value="ECO:0007669"/>
    <property type="project" value="InterPro"/>
</dbReference>
<dbReference type="CDD" id="cd10800">
    <property type="entry name" value="LamB_YcsF_YbgL_like"/>
    <property type="match status" value="1"/>
</dbReference>
<dbReference type="Gene3D" id="3.20.20.370">
    <property type="entry name" value="Glycoside hydrolase/deacetylase"/>
    <property type="match status" value="1"/>
</dbReference>
<dbReference type="HAMAP" id="MF_00691">
    <property type="entry name" value="PxpA"/>
    <property type="match status" value="1"/>
</dbReference>
<dbReference type="InterPro" id="IPR011330">
    <property type="entry name" value="Glyco_hydro/deAcase_b/a-brl"/>
</dbReference>
<dbReference type="InterPro" id="IPR005501">
    <property type="entry name" value="LamB/YcsF/PxpA-like"/>
</dbReference>
<dbReference type="NCBIfam" id="NF003812">
    <property type="entry name" value="PRK05406.1-1"/>
    <property type="match status" value="1"/>
</dbReference>
<dbReference type="NCBIfam" id="NF003814">
    <property type="entry name" value="PRK05406.1-3"/>
    <property type="match status" value="1"/>
</dbReference>
<dbReference type="NCBIfam" id="NF003815">
    <property type="entry name" value="PRK05406.1-4"/>
    <property type="match status" value="1"/>
</dbReference>
<dbReference type="NCBIfam" id="NF003816">
    <property type="entry name" value="PRK05406.1-5"/>
    <property type="match status" value="1"/>
</dbReference>
<dbReference type="PANTHER" id="PTHR30292:SF0">
    <property type="entry name" value="5-OXOPROLINASE SUBUNIT A"/>
    <property type="match status" value="1"/>
</dbReference>
<dbReference type="PANTHER" id="PTHR30292">
    <property type="entry name" value="UNCHARACTERIZED PROTEIN YBGL-RELATED"/>
    <property type="match status" value="1"/>
</dbReference>
<dbReference type="Pfam" id="PF03746">
    <property type="entry name" value="LamB_YcsF"/>
    <property type="match status" value="1"/>
</dbReference>
<dbReference type="SUPFAM" id="SSF88713">
    <property type="entry name" value="Glycoside hydrolase/deacetylase"/>
    <property type="match status" value="1"/>
</dbReference>
<keyword id="KW-0067">ATP-binding</keyword>
<keyword id="KW-0378">Hydrolase</keyword>
<keyword id="KW-0547">Nucleotide-binding</keyword>
<keyword id="KW-1185">Reference proteome</keyword>
<comment type="function">
    <text evidence="1">Catalyzes the cleavage of 5-oxoproline to form L-glutamate coupled to the hydrolysis of ATP to ADP and inorganic phosphate.</text>
</comment>
<comment type="catalytic activity">
    <reaction evidence="1">
        <text>5-oxo-L-proline + ATP + 2 H2O = L-glutamate + ADP + phosphate + H(+)</text>
        <dbReference type="Rhea" id="RHEA:10348"/>
        <dbReference type="ChEBI" id="CHEBI:15377"/>
        <dbReference type="ChEBI" id="CHEBI:15378"/>
        <dbReference type="ChEBI" id="CHEBI:29985"/>
        <dbReference type="ChEBI" id="CHEBI:30616"/>
        <dbReference type="ChEBI" id="CHEBI:43474"/>
        <dbReference type="ChEBI" id="CHEBI:58402"/>
        <dbReference type="ChEBI" id="CHEBI:456216"/>
        <dbReference type="EC" id="3.5.2.9"/>
    </reaction>
</comment>
<comment type="subunit">
    <text evidence="1">Forms a complex composed of PxpA, PxpB and PxpC.</text>
</comment>
<comment type="similarity">
    <text evidence="1">Belongs to the LamB/PxpA family.</text>
</comment>
<feature type="chain" id="PRO_1000132076" description="5-oxoprolinase subunit A">
    <location>
        <begin position="1"/>
        <end position="244"/>
    </location>
</feature>
<gene>
    <name evidence="1" type="primary">pxpA</name>
    <name type="ordered locus">SbBS512_E0630</name>
</gene>
<accession>B2TU96</accession>
<reference key="1">
    <citation type="submission" date="2008-05" db="EMBL/GenBank/DDBJ databases">
        <title>Complete sequence of Shigella boydii serotype 18 strain BS512.</title>
        <authorList>
            <person name="Rasko D.A."/>
            <person name="Rosovitz M."/>
            <person name="Maurelli A.T."/>
            <person name="Myers G."/>
            <person name="Seshadri R."/>
            <person name="Cer R."/>
            <person name="Jiang L."/>
            <person name="Ravel J."/>
            <person name="Sebastian Y."/>
        </authorList>
    </citation>
    <scope>NUCLEOTIDE SEQUENCE [LARGE SCALE GENOMIC DNA]</scope>
    <source>
        <strain>CDC 3083-94 / BS512</strain>
    </source>
</reference>
<protein>
    <recommendedName>
        <fullName evidence="1">5-oxoprolinase subunit A</fullName>
        <shortName evidence="1">5-OPase subunit A</shortName>
        <ecNumber evidence="1">3.5.2.9</ecNumber>
    </recommendedName>
    <alternativeName>
        <fullName evidence="1">5-oxoprolinase (ATP-hydrolyzing) subunit A</fullName>
    </alternativeName>
</protein>
<proteinExistence type="inferred from homology"/>
<evidence type="ECO:0000255" key="1">
    <source>
        <dbReference type="HAMAP-Rule" id="MF_00691"/>
    </source>
</evidence>
<sequence>MKIDLNADLGEGCASDAELLTLVSSANIACGFHAGDAQTMQACVREAIKNGVAIGAHPSFPDRENFGRSAMQLPPETVYAQTLYQIGALATIARAQGGVMRHVKPHGMLYNQTAKEAQLADAIARAVYACDPALVLVGLAGSELIRAGKQYGLTTREEVFADRGYQADGSLVPRSQPGALIENEEQALAQTLEMVQHGRVKSITGEWATVTAQTVCLHGDGEHALAFARRLRSTFAEKEIVVAA</sequence>